<name>KHSE_ECOLI</name>
<keyword id="KW-0028">Amino-acid biosynthesis</keyword>
<keyword id="KW-0067">ATP-binding</keyword>
<keyword id="KW-0963">Cytoplasm</keyword>
<keyword id="KW-0418">Kinase</keyword>
<keyword id="KW-0547">Nucleotide-binding</keyword>
<keyword id="KW-1185">Reference proteome</keyword>
<keyword id="KW-0791">Threonine biosynthesis</keyword>
<keyword id="KW-0808">Transferase</keyword>
<feature type="chain" id="PRO_0000156567" description="Homoserine kinase">
    <location>
        <begin position="1"/>
        <end position="310"/>
    </location>
</feature>
<feature type="binding site" evidence="1">
    <location>
        <begin position="91"/>
        <end position="101"/>
    </location>
    <ligand>
        <name>ATP</name>
        <dbReference type="ChEBI" id="CHEBI:30616"/>
    </ligand>
</feature>
<feature type="mutagenesis site" description="35-fold decrease in kinase activity." evidence="2">
    <original>H</original>
    <variation>L</variation>
    <location>
        <position position="139"/>
    </location>
</feature>
<feature type="mutagenesis site" description="2-fold decrease in kinase activity but nearly no change in substrates affinity." evidence="2">
    <original>H</original>
    <variation>L</variation>
    <location>
        <position position="203"/>
    </location>
</feature>
<feature type="mutagenesis site" description="3500-fold decrease in kinase activity." evidence="2">
    <original>H</original>
    <variation>Q</variation>
    <location>
        <position position="206"/>
    </location>
</feature>
<feature type="mutagenesis site" description="250-fold decrease in kinase activity but no change in substrates affinity." evidence="2">
    <original>R</original>
    <variation>H</variation>
    <location>
        <position position="235"/>
    </location>
</feature>
<feature type="mutagenesis site" description="26200-fold decrease in catalytic efficiency." evidence="2">
    <original>R</original>
    <variation>L</variation>
    <location>
        <position position="235"/>
    </location>
</feature>
<reference key="1">
    <citation type="journal article" date="1981" name="Nucleic Acids Res.">
        <title>Nucleotide sequence of the thrB gene of E. coli, and its two adjacent regions; the thrAB and thrBC junctions.</title>
        <authorList>
            <person name="Cossart P."/>
            <person name="Katinka M."/>
            <person name="Yaniv M."/>
        </authorList>
    </citation>
    <scope>NUCLEOTIDE SEQUENCE [GENOMIC DNA]</scope>
</reference>
<reference key="2">
    <citation type="submission" date="1993-05" db="EMBL/GenBank/DDBJ databases">
        <title>Update on the nucleotide sequence of the thrB gene of E. coli.</title>
        <authorList>
            <person name="Deborde D.C."/>
            <person name="Strange J.C."/>
            <person name="Wright B.E."/>
        </authorList>
    </citation>
    <scope>NUCLEOTIDE SEQUENCE [GENOMIC DNA]</scope>
    <scope>SEQUENCE REVISION TO 166-190</scope>
</reference>
<reference key="3">
    <citation type="journal article" date="1992" name="Nucleic Acids Res.">
        <title>Systematic sequencing of the Escherichia coli genome: analysis of the 0-2.4 min region.</title>
        <authorList>
            <person name="Yura T."/>
            <person name="Mori H."/>
            <person name="Nagai H."/>
            <person name="Nagata T."/>
            <person name="Ishihama A."/>
            <person name="Fujita N."/>
            <person name="Isono K."/>
            <person name="Mizobuchi K."/>
            <person name="Nakata A."/>
        </authorList>
    </citation>
    <scope>NUCLEOTIDE SEQUENCE [LARGE SCALE GENOMIC DNA]</scope>
    <source>
        <strain>K12</strain>
    </source>
</reference>
<reference key="4">
    <citation type="journal article" date="1995" name="Nucleic Acids Res.">
        <title>Analysis of the Escherichia coli genome VI: DNA sequence of the region from 92.8 through 100 minutes.</title>
        <authorList>
            <person name="Burland V.D."/>
            <person name="Plunkett G. III"/>
            <person name="Sofia H.J."/>
            <person name="Daniels D.L."/>
            <person name="Blattner F.R."/>
        </authorList>
    </citation>
    <scope>NUCLEOTIDE SEQUENCE [LARGE SCALE GENOMIC DNA]</scope>
    <source>
        <strain>K12 / MG1655 / ATCC 47076</strain>
    </source>
</reference>
<reference key="5">
    <citation type="journal article" date="1997" name="Science">
        <title>The complete genome sequence of Escherichia coli K-12.</title>
        <authorList>
            <person name="Blattner F.R."/>
            <person name="Plunkett G. III"/>
            <person name="Bloch C.A."/>
            <person name="Perna N.T."/>
            <person name="Burland V."/>
            <person name="Riley M."/>
            <person name="Collado-Vides J."/>
            <person name="Glasner J.D."/>
            <person name="Rode C.K."/>
            <person name="Mayhew G.F."/>
            <person name="Gregor J."/>
            <person name="Davis N.W."/>
            <person name="Kirkpatrick H.A."/>
            <person name="Goeden M.A."/>
            <person name="Rose D.J."/>
            <person name="Mau B."/>
            <person name="Shao Y."/>
        </authorList>
    </citation>
    <scope>NUCLEOTIDE SEQUENCE [LARGE SCALE GENOMIC DNA]</scope>
    <source>
        <strain>K12 / MG1655 / ATCC 47076</strain>
    </source>
</reference>
<reference key="6">
    <citation type="journal article" date="2006" name="Mol. Syst. Biol.">
        <title>Highly accurate genome sequences of Escherichia coli K-12 strains MG1655 and W3110.</title>
        <authorList>
            <person name="Hayashi K."/>
            <person name="Morooka N."/>
            <person name="Yamamoto Y."/>
            <person name="Fujita K."/>
            <person name="Isono K."/>
            <person name="Choi S."/>
            <person name="Ohtsubo E."/>
            <person name="Baba T."/>
            <person name="Wanner B.L."/>
            <person name="Mori H."/>
            <person name="Horiuchi T."/>
        </authorList>
    </citation>
    <scope>NUCLEOTIDE SEQUENCE [LARGE SCALE GENOMIC DNA]</scope>
    <scope>SEQUENCE REVISION</scope>
    <source>
        <strain>K12 / W3110 / ATCC 27325 / DSM 5911</strain>
    </source>
</reference>
<reference key="7">
    <citation type="journal article" date="1996" name="Biochemistry">
        <title>Substrate specificity and identification of functional groups of homoserine kinase from Escherichia coli.</title>
        <authorList>
            <person name="Huo X."/>
            <person name="Viola R.E."/>
        </authorList>
    </citation>
    <scope>FUNCTION AS A HOMOSERINE KINASE</scope>
    <scope>CATALYTIC ACTIVITY</scope>
    <scope>SUBSTRATE SPECIFICITY</scope>
    <scope>KINETIC PARAMETERS</scope>
    <scope>MUTAGENESIS OF HIS-139; HIS-203; HIS-206 AND ARG-235</scope>
</reference>
<dbReference type="EC" id="2.7.1.39"/>
<dbReference type="EMBL" id="L13601">
    <property type="protein sequence ID" value="AAA20618.1"/>
    <property type="molecule type" value="Genomic_DNA"/>
</dbReference>
<dbReference type="EMBL" id="U14003">
    <property type="protein sequence ID" value="AAA97302.1"/>
    <property type="molecule type" value="Genomic_DNA"/>
</dbReference>
<dbReference type="EMBL" id="U00096">
    <property type="protein sequence ID" value="AAC73114.1"/>
    <property type="molecule type" value="Genomic_DNA"/>
</dbReference>
<dbReference type="EMBL" id="AP009048">
    <property type="protein sequence ID" value="BAB96580.2"/>
    <property type="molecule type" value="Genomic_DNA"/>
</dbReference>
<dbReference type="PIR" id="S56630">
    <property type="entry name" value="KIECM"/>
</dbReference>
<dbReference type="RefSeq" id="NP_414544.1">
    <property type="nucleotide sequence ID" value="NC_000913.3"/>
</dbReference>
<dbReference type="RefSeq" id="WP_000241662.1">
    <property type="nucleotide sequence ID" value="NZ_LN832404.1"/>
</dbReference>
<dbReference type="SMR" id="P00547"/>
<dbReference type="BioGRID" id="4261934">
    <property type="interactions" value="12"/>
</dbReference>
<dbReference type="FunCoup" id="P00547">
    <property type="interactions" value="610"/>
</dbReference>
<dbReference type="IntAct" id="P00547">
    <property type="interactions" value="2"/>
</dbReference>
<dbReference type="STRING" id="511145.b0003"/>
<dbReference type="BindingDB" id="P00547"/>
<dbReference type="jPOST" id="P00547"/>
<dbReference type="PaxDb" id="511145-b0003"/>
<dbReference type="EnsemblBacteria" id="AAC73114">
    <property type="protein sequence ID" value="AAC73114"/>
    <property type="gene ID" value="b0003"/>
</dbReference>
<dbReference type="GeneID" id="947498"/>
<dbReference type="KEGG" id="ecj:JW0002"/>
<dbReference type="KEGG" id="eco:b0003"/>
<dbReference type="KEGG" id="ecoc:C3026_00015"/>
<dbReference type="PATRIC" id="fig|1411691.4.peg.2280"/>
<dbReference type="EchoBASE" id="EB0992"/>
<dbReference type="eggNOG" id="COG0083">
    <property type="taxonomic scope" value="Bacteria"/>
</dbReference>
<dbReference type="HOGENOM" id="CLU_041243_1_1_6"/>
<dbReference type="InParanoid" id="P00547"/>
<dbReference type="OMA" id="CANRIPH"/>
<dbReference type="OrthoDB" id="9769912at2"/>
<dbReference type="PhylomeDB" id="P00547"/>
<dbReference type="BioCyc" id="EcoCyc:HOMOSERKIN-MONOMER"/>
<dbReference type="BioCyc" id="MetaCyc:HOMOSERKIN-MONOMER"/>
<dbReference type="SABIO-RK" id="P00547"/>
<dbReference type="UniPathway" id="UPA00050">
    <property type="reaction ID" value="UER00064"/>
</dbReference>
<dbReference type="PRO" id="PR:P00547"/>
<dbReference type="Proteomes" id="UP000000625">
    <property type="component" value="Chromosome"/>
</dbReference>
<dbReference type="GO" id="GO:0005829">
    <property type="term" value="C:cytosol"/>
    <property type="evidence" value="ECO:0000314"/>
    <property type="project" value="EcoCyc"/>
</dbReference>
<dbReference type="GO" id="GO:0005524">
    <property type="term" value="F:ATP binding"/>
    <property type="evidence" value="ECO:0007669"/>
    <property type="project" value="UniProtKB-UniRule"/>
</dbReference>
<dbReference type="GO" id="GO:0004413">
    <property type="term" value="F:homoserine kinase activity"/>
    <property type="evidence" value="ECO:0000314"/>
    <property type="project" value="EcoCyc"/>
</dbReference>
<dbReference type="GO" id="GO:0009088">
    <property type="term" value="P:threonine biosynthetic process"/>
    <property type="evidence" value="ECO:0000315"/>
    <property type="project" value="EcoCyc"/>
</dbReference>
<dbReference type="FunFam" id="3.30.230.10:FF:000020">
    <property type="entry name" value="Homoserine kinase"/>
    <property type="match status" value="1"/>
</dbReference>
<dbReference type="FunFam" id="3.30.70.890:FF:000002">
    <property type="entry name" value="Homoserine kinase"/>
    <property type="match status" value="1"/>
</dbReference>
<dbReference type="Gene3D" id="3.30.230.10">
    <property type="match status" value="1"/>
</dbReference>
<dbReference type="Gene3D" id="3.30.70.890">
    <property type="entry name" value="GHMP kinase, C-terminal domain"/>
    <property type="match status" value="1"/>
</dbReference>
<dbReference type="HAMAP" id="MF_00384">
    <property type="entry name" value="Homoser_kinase"/>
    <property type="match status" value="1"/>
</dbReference>
<dbReference type="InterPro" id="IPR013750">
    <property type="entry name" value="GHMP_kinase_C_dom"/>
</dbReference>
<dbReference type="InterPro" id="IPR036554">
    <property type="entry name" value="GHMP_kinase_C_sf"/>
</dbReference>
<dbReference type="InterPro" id="IPR006204">
    <property type="entry name" value="GHMP_kinase_N_dom"/>
</dbReference>
<dbReference type="InterPro" id="IPR006203">
    <property type="entry name" value="GHMP_knse_ATP-bd_CS"/>
</dbReference>
<dbReference type="InterPro" id="IPR000870">
    <property type="entry name" value="Homoserine_kinase"/>
</dbReference>
<dbReference type="InterPro" id="IPR020568">
    <property type="entry name" value="Ribosomal_Su5_D2-typ_SF"/>
</dbReference>
<dbReference type="InterPro" id="IPR014721">
    <property type="entry name" value="Ribsml_uS5_D2-typ_fold_subgr"/>
</dbReference>
<dbReference type="NCBIfam" id="NF002288">
    <property type="entry name" value="PRK01212.1-4"/>
    <property type="match status" value="1"/>
</dbReference>
<dbReference type="NCBIfam" id="TIGR00191">
    <property type="entry name" value="thrB"/>
    <property type="match status" value="1"/>
</dbReference>
<dbReference type="PANTHER" id="PTHR20861:SF1">
    <property type="entry name" value="HOMOSERINE KINASE"/>
    <property type="match status" value="1"/>
</dbReference>
<dbReference type="PANTHER" id="PTHR20861">
    <property type="entry name" value="HOMOSERINE/4-DIPHOSPHOCYTIDYL-2-C-METHYL-D-ERYTHRITOL KINASE"/>
    <property type="match status" value="1"/>
</dbReference>
<dbReference type="Pfam" id="PF08544">
    <property type="entry name" value="GHMP_kinases_C"/>
    <property type="match status" value="1"/>
</dbReference>
<dbReference type="Pfam" id="PF00288">
    <property type="entry name" value="GHMP_kinases_N"/>
    <property type="match status" value="1"/>
</dbReference>
<dbReference type="PIRSF" id="PIRSF000676">
    <property type="entry name" value="Homoser_kin"/>
    <property type="match status" value="1"/>
</dbReference>
<dbReference type="PRINTS" id="PR00958">
    <property type="entry name" value="HOMSERKINASE"/>
</dbReference>
<dbReference type="SUPFAM" id="SSF55060">
    <property type="entry name" value="GHMP Kinase, C-terminal domain"/>
    <property type="match status" value="1"/>
</dbReference>
<dbReference type="SUPFAM" id="SSF54211">
    <property type="entry name" value="Ribosomal protein S5 domain 2-like"/>
    <property type="match status" value="1"/>
</dbReference>
<dbReference type="PROSITE" id="PS00627">
    <property type="entry name" value="GHMP_KINASES_ATP"/>
    <property type="match status" value="1"/>
</dbReference>
<protein>
    <recommendedName>
        <fullName>Homoserine kinase</fullName>
        <shortName>HK</shortName>
        <shortName>HSK</shortName>
        <ecNumber>2.7.1.39</ecNumber>
    </recommendedName>
</protein>
<organism>
    <name type="scientific">Escherichia coli (strain K12)</name>
    <dbReference type="NCBI Taxonomy" id="83333"/>
    <lineage>
        <taxon>Bacteria</taxon>
        <taxon>Pseudomonadati</taxon>
        <taxon>Pseudomonadota</taxon>
        <taxon>Gammaproteobacteria</taxon>
        <taxon>Enterobacterales</taxon>
        <taxon>Enterobacteriaceae</taxon>
        <taxon>Escherichia</taxon>
    </lineage>
</organism>
<gene>
    <name type="primary">thrB</name>
    <name type="ordered locus">b0003</name>
    <name type="ordered locus">JW0002</name>
</gene>
<evidence type="ECO:0000255" key="1"/>
<evidence type="ECO:0000269" key="2">
    <source>
    </source>
</evidence>
<evidence type="ECO:0000305" key="3"/>
<proteinExistence type="evidence at protein level"/>
<sequence length="310" mass="33624">MVKVYAPASSANMSVGFDVLGAAVTPVDGALLGDVVTVEAAETFSLNNLGRFADKLPSEPRENIVYQCWERFCQELGKQIPVAMTLEKNMPIGSGLGSSACSVVAALMAMNEHCGKPLNDTRLLALMGELEGRISGSIHYDNVAPCFLGGMQLMIEENDIISQQVPGFDEWLWVLAYPGIKVSTAEARAILPAQYRRQDCIAHGRHLAGFIHACYSRQPELAAKLMKDVIAEPYRERLLPGFRQARQAVAEIGAVASGISGSGPTLFALCDKPETAQRVADWLGKNYLQNQEGFVHICRLDTAGARVLEN</sequence>
<accession>P00547</accession>
<comment type="function">
    <text evidence="2">Catalyzes the ATP-dependent phosphorylation of L-homoserine to L-homoserine phosphate. Is also able to phosphorylate the hydroxy group on gamma-carbon of L-homoserine analogs when the functional group at the alpha-position is a carboxyl, an ester, or even a hydroxymethyl group. Neither L-threonine nor L-serine are substrates of the enzyme.</text>
</comment>
<comment type="catalytic activity">
    <reaction evidence="2">
        <text>L-homoserine + ATP = O-phospho-L-homoserine + ADP + H(+)</text>
        <dbReference type="Rhea" id="RHEA:13985"/>
        <dbReference type="ChEBI" id="CHEBI:15378"/>
        <dbReference type="ChEBI" id="CHEBI:30616"/>
        <dbReference type="ChEBI" id="CHEBI:57476"/>
        <dbReference type="ChEBI" id="CHEBI:57590"/>
        <dbReference type="ChEBI" id="CHEBI:456216"/>
        <dbReference type="EC" id="2.7.1.39"/>
    </reaction>
</comment>
<comment type="biophysicochemical properties">
    <kinetics>
        <KM evidence="2">0.14 mM for L-homoserine</KM>
        <KM evidence="2">31.8 mM for D-homoserine</KM>
        <KM evidence="2">0.13 mM for ATP</KM>
        <text>The catalytic efficiency is 500-fold higher with L-homoserine than with D-homoserine as substrate.</text>
    </kinetics>
</comment>
<comment type="pathway">
    <text>Amino-acid biosynthesis; L-threonine biosynthesis; L-threonine from L-aspartate: step 4/5.</text>
</comment>
<comment type="subcellular location">
    <subcellularLocation>
        <location evidence="3">Cytoplasm</location>
    </subcellularLocation>
</comment>
<comment type="similarity">
    <text evidence="3">Belongs to the GHMP kinase family. Homoserine kinase subfamily.</text>
</comment>